<evidence type="ECO:0000250" key="1">
    <source>
        <dbReference type="UniProtKB" id="P11766"/>
    </source>
</evidence>
<evidence type="ECO:0000269" key="2">
    <source>
    </source>
</evidence>
<evidence type="ECO:0000269" key="3">
    <source>
    </source>
</evidence>
<evidence type="ECO:0000303" key="4">
    <source>
    </source>
</evidence>
<evidence type="ECO:0000305" key="5"/>
<evidence type="ECO:0000312" key="6">
    <source>
        <dbReference type="EMBL" id="CDM25267.1"/>
    </source>
</evidence>
<proteinExistence type="evidence at protein level"/>
<name>GEOA_CASD6</name>
<keyword id="KW-0903">Direct protein sequencing</keyword>
<keyword id="KW-0479">Metal-binding</keyword>
<keyword id="KW-0520">NAD</keyword>
<keyword id="KW-0560">Oxidoreductase</keyword>
<keyword id="KW-1185">Reference proteome</keyword>
<keyword id="KW-0862">Zinc</keyword>
<gene>
    <name evidence="4" type="primary">geoA</name>
    <name evidence="6" type="ORF">BN940_14111</name>
</gene>
<protein>
    <recommendedName>
        <fullName evidence="4">Geraniol dehydrogenase</fullName>
        <shortName evidence="4">GeDH</shortName>
        <ecNumber evidence="2">1.1.1.347</ecNumber>
    </recommendedName>
    <alternativeName>
        <fullName evidence="4">Geraniol oxidation pathway protein A</fullName>
    </alternativeName>
    <alternativeName>
        <fullName>Perillyl-alcohol dehydrogenase</fullName>
        <ecNumber evidence="2">1.1.1.144</ecNumber>
    </alternativeName>
</protein>
<feature type="chain" id="PRO_0000418648" description="Geraniol dehydrogenase">
    <location>
        <begin position="1"/>
        <end position="373"/>
    </location>
</feature>
<feature type="binding site" evidence="1">
    <location>
        <position position="47"/>
    </location>
    <ligand>
        <name>Zn(2+)</name>
        <dbReference type="ChEBI" id="CHEBI:29105"/>
        <label>1</label>
        <note>catalytic</note>
    </ligand>
</feature>
<feature type="binding site" evidence="1">
    <location>
        <position position="67"/>
    </location>
    <ligand>
        <name>Zn(2+)</name>
        <dbReference type="ChEBI" id="CHEBI:29105"/>
        <label>1</label>
        <note>catalytic</note>
    </ligand>
</feature>
<feature type="binding site" evidence="1">
    <location>
        <position position="96"/>
    </location>
    <ligand>
        <name>Zn(2+)</name>
        <dbReference type="ChEBI" id="CHEBI:29105"/>
        <label>2</label>
    </ligand>
</feature>
<feature type="binding site" evidence="1">
    <location>
        <position position="99"/>
    </location>
    <ligand>
        <name>Zn(2+)</name>
        <dbReference type="ChEBI" id="CHEBI:29105"/>
        <label>2</label>
    </ligand>
</feature>
<feature type="binding site" evidence="1">
    <location>
        <position position="102"/>
    </location>
    <ligand>
        <name>Zn(2+)</name>
        <dbReference type="ChEBI" id="CHEBI:29105"/>
        <label>2</label>
    </ligand>
</feature>
<feature type="binding site" evidence="1">
    <location>
        <position position="110"/>
    </location>
    <ligand>
        <name>Zn(2+)</name>
        <dbReference type="ChEBI" id="CHEBI:29105"/>
        <label>2</label>
    </ligand>
</feature>
<feature type="binding site" evidence="1">
    <location>
        <position position="175"/>
    </location>
    <ligand>
        <name>Zn(2+)</name>
        <dbReference type="ChEBI" id="CHEBI:29105"/>
        <label>1</label>
        <note>catalytic</note>
    </ligand>
</feature>
<sequence length="373" mass="38274">MNDTQDFISAQAAVLRQVGGPLAVEPVRISMPKGDEVLIRIAGVGVCHTDLVCRDGFPVPLPIVLGHEGSGTVEAVGEQVRTLKPGDRVVLSFNSCGHCGNCHDGHPSNCLQMLPLNFGGAQRVDGGQVLDGAGHPVQSMFFGQSSFGTHAVAREINAVKVGDDLPLELLGPLGCGIQTGAGAAINSLGIGPGQSLAIFGGGGVGLSALLGARAVGADRVVVIEPNAARRALALELGASHALDPHAEGDLVAAIKAATGGGATHSLDTTGLPPVIGSAIACTLPGGTVGMVGLPAPDAPVPATLLDLLSKSVTLRPITEGDADPQRFIPRMLDFHRAGKFPFDRLITRYRFDQINEALHATEKGEAIKPVLVF</sequence>
<accession>H1ZV38</accession>
<accession>W8X532</accession>
<dbReference type="EC" id="1.1.1.347" evidence="2"/>
<dbReference type="EC" id="1.1.1.144" evidence="2"/>
<dbReference type="EMBL" id="FR669447">
    <property type="protein sequence ID" value="CCF55024.1"/>
    <property type="molecule type" value="Genomic_DNA"/>
</dbReference>
<dbReference type="EMBL" id="HG916765">
    <property type="protein sequence ID" value="CDM25267.1"/>
    <property type="molecule type" value="Genomic_DNA"/>
</dbReference>
<dbReference type="RefSeq" id="WP_043683915.1">
    <property type="nucleotide sequence ID" value="NZ_HG916765.1"/>
</dbReference>
<dbReference type="SMR" id="H1ZV38"/>
<dbReference type="STRING" id="1437824.BN940_14111"/>
<dbReference type="KEGG" id="ag:CCF55024"/>
<dbReference type="KEGG" id="cdn:BN940_14111"/>
<dbReference type="eggNOG" id="COG1062">
    <property type="taxonomic scope" value="Bacteria"/>
</dbReference>
<dbReference type="HOGENOM" id="CLU_026673_14_1_4"/>
<dbReference type="OrthoDB" id="9770544at2"/>
<dbReference type="BioCyc" id="MetaCyc:MONOMER-17740"/>
<dbReference type="BRENDA" id="1.1.1.347">
    <property type="organism ID" value="229"/>
</dbReference>
<dbReference type="UniPathway" id="UPA00137"/>
<dbReference type="Proteomes" id="UP000019805">
    <property type="component" value="Chromosome"/>
</dbReference>
<dbReference type="GO" id="GO:0004022">
    <property type="term" value="F:alcohol dehydrogenase (NAD+) activity"/>
    <property type="evidence" value="ECO:0000314"/>
    <property type="project" value="UniProtKB"/>
</dbReference>
<dbReference type="GO" id="GO:0051287">
    <property type="term" value="F:NAD binding"/>
    <property type="evidence" value="ECO:0000314"/>
    <property type="project" value="UniProtKB"/>
</dbReference>
<dbReference type="GO" id="GO:0018457">
    <property type="term" value="F:perillyl-alcohol dehydrogenase (NAD+) activity"/>
    <property type="evidence" value="ECO:0000314"/>
    <property type="project" value="UniProtKB"/>
</dbReference>
<dbReference type="GO" id="GO:0042803">
    <property type="term" value="F:protein homodimerization activity"/>
    <property type="evidence" value="ECO:0000314"/>
    <property type="project" value="UniProtKB"/>
</dbReference>
<dbReference type="GO" id="GO:0008270">
    <property type="term" value="F:zinc ion binding"/>
    <property type="evidence" value="ECO:0007669"/>
    <property type="project" value="InterPro"/>
</dbReference>
<dbReference type="GO" id="GO:0043694">
    <property type="term" value="P:monoterpene catabolic process"/>
    <property type="evidence" value="ECO:0000304"/>
    <property type="project" value="UniProtKB"/>
</dbReference>
<dbReference type="GO" id="GO:0016098">
    <property type="term" value="P:monoterpenoid metabolic process"/>
    <property type="evidence" value="ECO:0000314"/>
    <property type="project" value="UniProtKB"/>
</dbReference>
<dbReference type="CDD" id="cd08278">
    <property type="entry name" value="benzyl_alcohol_DH"/>
    <property type="match status" value="1"/>
</dbReference>
<dbReference type="Gene3D" id="3.90.180.10">
    <property type="entry name" value="Medium-chain alcohol dehydrogenases, catalytic domain"/>
    <property type="match status" value="1"/>
</dbReference>
<dbReference type="Gene3D" id="3.40.50.720">
    <property type="entry name" value="NAD(P)-binding Rossmann-like Domain"/>
    <property type="match status" value="1"/>
</dbReference>
<dbReference type="InterPro" id="IPR017896">
    <property type="entry name" value="4Fe4S_Fe-S-bd"/>
</dbReference>
<dbReference type="InterPro" id="IPR013149">
    <property type="entry name" value="ADH-like_C"/>
</dbReference>
<dbReference type="InterPro" id="IPR013154">
    <property type="entry name" value="ADH-like_N"/>
</dbReference>
<dbReference type="InterPro" id="IPR002328">
    <property type="entry name" value="ADH_Zn_CS"/>
</dbReference>
<dbReference type="InterPro" id="IPR011032">
    <property type="entry name" value="GroES-like_sf"/>
</dbReference>
<dbReference type="InterPro" id="IPR036291">
    <property type="entry name" value="NAD(P)-bd_dom_sf"/>
</dbReference>
<dbReference type="InterPro" id="IPR020843">
    <property type="entry name" value="PKS_ER"/>
</dbReference>
<dbReference type="PANTHER" id="PTHR43350">
    <property type="entry name" value="NAD-DEPENDENT ALCOHOL DEHYDROGENASE"/>
    <property type="match status" value="1"/>
</dbReference>
<dbReference type="PANTHER" id="PTHR43350:SF21">
    <property type="entry name" value="S-NITROSOMYCOTHIOL REDUCTASE MSCR"/>
    <property type="match status" value="1"/>
</dbReference>
<dbReference type="Pfam" id="PF08240">
    <property type="entry name" value="ADH_N"/>
    <property type="match status" value="1"/>
</dbReference>
<dbReference type="Pfam" id="PF00107">
    <property type="entry name" value="ADH_zinc_N"/>
    <property type="match status" value="1"/>
</dbReference>
<dbReference type="SMART" id="SM00829">
    <property type="entry name" value="PKS_ER"/>
    <property type="match status" value="1"/>
</dbReference>
<dbReference type="SUPFAM" id="SSF50129">
    <property type="entry name" value="GroES-like"/>
    <property type="match status" value="1"/>
</dbReference>
<dbReference type="SUPFAM" id="SSF51735">
    <property type="entry name" value="NAD(P)-binding Rossmann-fold domains"/>
    <property type="match status" value="1"/>
</dbReference>
<dbReference type="PROSITE" id="PS00059">
    <property type="entry name" value="ADH_ZINC"/>
    <property type="match status" value="1"/>
</dbReference>
<reference key="1">
    <citation type="journal article" date="2012" name="Appl. Environ. Microbiol.">
        <title>Geraniol and geranial dehydrogenases induced in anaerobic monoterpene degradation by Castellaniella defragrans.</title>
        <authorList>
            <person name="Luddeke F."/>
            <person name="Wulfing A."/>
            <person name="Timke M."/>
            <person name="Germer F."/>
            <person name="Weber J."/>
            <person name="Dikfidan A."/>
            <person name="Rahnfeld T."/>
            <person name="Linder D."/>
            <person name="Meyerdierks A."/>
            <person name="Harder J."/>
        </authorList>
    </citation>
    <scope>NUCLEOTIDE SEQUENCE [GENOMIC DNA]</scope>
    <scope>PROTEIN SEQUENCE OF 1-29</scope>
    <scope>FUNCTION</scope>
    <scope>CATALYTIC ACTIVITY</scope>
    <scope>SUBSTRATE SPECIFICITY</scope>
    <scope>BIOPHYSICOCHEMICAL PROPERTIES</scope>
    <scope>ACTIVITY REGULATION</scope>
    <scope>INDUCTION</scope>
    <scope>GENE NAME</scope>
    <scope>PATHWAY</scope>
    <scope>SUBUNIT</scope>
    <source>
        <strain>DSM 12143 / CCUG 39792 / 65Phen</strain>
    </source>
</reference>
<reference key="2">
    <citation type="journal article" date="2014" name="BMC Microbiol.">
        <title>The oxygen-independent metabolism of cyclic monoterpenes in Castellaniella defragrans 65Phen.</title>
        <authorList>
            <person name="Petasch J."/>
            <person name="Disch E.M."/>
            <person name="Markert S."/>
            <person name="Becher D."/>
            <person name="Schweder T."/>
            <person name="Huttel B."/>
            <person name="Reinhardt R."/>
            <person name="Harder J."/>
        </authorList>
    </citation>
    <scope>NUCLEOTIDE SEQUENCE [LARGE SCALE GENOMIC DNA]</scope>
    <scope>IDENTIFICATION BY MASS SPECTROMETRY</scope>
    <scope>FUNCTION</scope>
    <scope>PATHWAY</scope>
    <scope>INDUCTION</scope>
    <source>
        <strain>DSM 12143 / CCUG 39792 / 65Phen</strain>
    </source>
</reference>
<comment type="function">
    <text evidence="2 3">Involved in the degradation of the monoterpenes beta-myrcene and limonene (PubMed:22286981, PubMed:24952578). During anaerobic degradation of beta-myrcene, catalyzes the NAD(+)-dependent oxidation of geraniol to geranial (PubMed:22286981). Can also catalyze the oxidation of (S)-perillyl alcohol to perillyl aldehyde, and to a lesser extent, the oxidation of nerol, citronellol, cumic alcohol, and benzyl alcohol (PubMed:22286981). Cannot use NADP(+) instead of NAD(+) as cosubstrate (PubMed:22286981).</text>
</comment>
<comment type="catalytic activity">
    <reaction evidence="2">
        <text>(2E)-geraniol + NAD(+) = (2E)-geranial + NADH + H(+)</text>
        <dbReference type="Rhea" id="RHEA:34347"/>
        <dbReference type="ChEBI" id="CHEBI:15378"/>
        <dbReference type="ChEBI" id="CHEBI:16980"/>
        <dbReference type="ChEBI" id="CHEBI:17447"/>
        <dbReference type="ChEBI" id="CHEBI:57540"/>
        <dbReference type="ChEBI" id="CHEBI:57945"/>
        <dbReference type="EC" id="1.1.1.347"/>
    </reaction>
    <physiologicalReaction direction="left-to-right" evidence="2">
        <dbReference type="Rhea" id="RHEA:34348"/>
    </physiologicalReaction>
</comment>
<comment type="catalytic activity">
    <reaction evidence="2">
        <text>perillyl alcohol + NAD(+) = perillyl aldehyde + NADH + H(+)</text>
        <dbReference type="Rhea" id="RHEA:10664"/>
        <dbReference type="ChEBI" id="CHEBI:15378"/>
        <dbReference type="ChEBI" id="CHEBI:15420"/>
        <dbReference type="ChEBI" id="CHEBI:15421"/>
        <dbReference type="ChEBI" id="CHEBI:57540"/>
        <dbReference type="ChEBI" id="CHEBI:57945"/>
        <dbReference type="EC" id="1.1.1.144"/>
    </reaction>
    <physiologicalReaction direction="left-to-right" evidence="2">
        <dbReference type="Rhea" id="RHEA:10665"/>
    </physiologicalReaction>
</comment>
<comment type="cofactor">
    <cofactor evidence="1">
        <name>Zn(2+)</name>
        <dbReference type="ChEBI" id="CHEBI:29105"/>
    </cofactor>
    <text evidence="1">Binds 2 Zn(2+) ions per subunit.</text>
</comment>
<comment type="activity regulation">
    <text evidence="2">Is inhibited by EDTA, N-ethylmaleimide, diethylpyrocarbonate, and 1-cyclohexyl-N-(2-morpholinoethyl)carbodiimide in vitro.</text>
</comment>
<comment type="biophysicochemical properties">
    <kinetics>
        <KM evidence="2">5 uM for geraniol</KM>
        <KM evidence="2">7 uM for (S)-perillyl alcohol</KM>
        <KM evidence="2">45 uM for nerol</KM>
        <KM evidence="2">86 uM for citronellol</KM>
        <KM evidence="2">21 uM for cumic alcohol</KM>
        <KM evidence="2">170 uM for benzyl alcohol</KM>
        <Vmax evidence="2">10.0 umol/min/mg enzyme with geraniol as substrate</Vmax>
        <Vmax evidence="2">18.0 umol/min/mg enzyme with (S)-perillyl alcohol as substrate</Vmax>
        <Vmax evidence="2">18.0 umol/min/mg enzyme with nerol as substrate</Vmax>
        <Vmax evidence="2">11.0 umol/min/mg enzyme with citronellol as substrate</Vmax>
        <Vmax evidence="2">14.0 umol/min/mg enzyme with cumic alcohol as substrate</Vmax>
        <Vmax evidence="2">47.0 umol/min/mg enzyme with benzyl alcohol as substrate</Vmax>
        <text>The values given here are for the native GeDH, the values for the recombinant protein can be found in another article (PubMed:22286981).</text>
    </kinetics>
    <phDependence>
        <text evidence="2">Optimum pH is 9.4.</text>
    </phDependence>
</comment>
<comment type="pathway">
    <text evidence="2 3">Terpene metabolism; monoterpene degradation.</text>
</comment>
<comment type="subunit">
    <text evidence="2">Homodimer.</text>
</comment>
<comment type="induction">
    <text evidence="2 3">By the monoterpenes limonene and alpha-phellandrene.</text>
</comment>
<comment type="similarity">
    <text evidence="5">Belongs to the zinc-containing alcohol dehydrogenase family.</text>
</comment>
<organism>
    <name type="scientific">Castellaniella defragrans (strain DSM 12143 / CCUG 39792 / 65Phen)</name>
    <name type="common">Alcaligenes defragrans</name>
    <dbReference type="NCBI Taxonomy" id="1437824"/>
    <lineage>
        <taxon>Bacteria</taxon>
        <taxon>Pseudomonadati</taxon>
        <taxon>Pseudomonadota</taxon>
        <taxon>Betaproteobacteria</taxon>
        <taxon>Burkholderiales</taxon>
        <taxon>Alcaligenaceae</taxon>
        <taxon>Castellaniella</taxon>
    </lineage>
</organism>